<geneLocation type="chloroplast"/>
<name>RR3_CHLRE</name>
<protein>
    <recommendedName>
        <fullName evidence="1">Small ribosomal subunit protein uS3c</fullName>
    </recommendedName>
    <alternativeName>
        <fullName>30S ribosomal protein S3, chloroplastic</fullName>
    </alternativeName>
    <alternativeName>
        <fullName>ORF 712</fullName>
    </alternativeName>
</protein>
<gene>
    <name type="primary">rps3</name>
</gene>
<feature type="chain" id="PRO_0000130275" description="Small ribosomal subunit protein uS3c">
    <location>
        <begin position="1"/>
        <end position="712"/>
    </location>
</feature>
<feature type="region of interest" description="S3-like 1st part">
    <location>
        <begin position="1"/>
        <end position="118"/>
    </location>
</feature>
<feature type="region of interest" description="Intervening sequence (IVS)">
    <location>
        <begin position="119"/>
        <end position="580"/>
    </location>
</feature>
<feature type="region of interest" description="S3-like 2nd part">
    <location>
        <begin position="581"/>
        <end position="712"/>
    </location>
</feature>
<feature type="sequence variant" description="In strain: CC-503.">
    <original>LCCY</original>
    <variation>SVVD</variation>
    <location>
        <begin position="428"/>
        <end position="431"/>
    </location>
</feature>
<feature type="sequence variant" description="In strain: CC-503.">
    <original>L</original>
    <variation>S</variation>
    <location>
        <position position="436"/>
    </location>
</feature>
<feature type="sequence conflict" description="In Ref. 1." evidence="1" ref="1">
    <original>N</original>
    <variation>W</variation>
    <location>
        <position position="292"/>
    </location>
</feature>
<keyword id="KW-0150">Chloroplast</keyword>
<keyword id="KW-0903">Direct protein sequencing</keyword>
<keyword id="KW-0934">Plastid</keyword>
<keyword id="KW-1185">Reference proteome</keyword>
<keyword id="KW-0687">Ribonucleoprotein</keyword>
<keyword id="KW-0689">Ribosomal protein</keyword>
<sequence length="712" mass="81855">MGQKVHPLGFRVGITKKHQSQWFARFQKYAYSQSVFEDHMLRTTLVNLFSNLEKESALATKQSKNRGATQPKAPKITQIKIERGLIPYEIGIQIHSNDCLSITKAIDNIKVSKDLVTNLQKTRKYLFKAGTQLKNASMQVSDNLNVAEGENSTMLKTKTSASGTSVLKKRTFKIQTQKPTKGKFVFKGKRKQKKKLSKAVFMRLKNIKRRFKKRQTIKKRYLNIISKGLLIRKKGNLIIRNVKIKRKNKTARLTSRKSQPTLRSGSNLRDNLAPVKSKMQRFNNRMSKKFANLFLTKLNKQFLVRLKAIMKFWHNQNVTKAPLGYNKKWSLAKSYALINNLKAKYLAKDILSLGSLRVQKLRKLISILEKKSLVKMETLRKDFITFGTLSKTRAFGYYQMITFLKQLKELVTKIKKQTIANVTTKQELCCYNKLALNKTKIQNLIRAKSKQTKSITQKVVNNFVKLVDDNQAMANESRKIKWISYLKDLVNKHRTENIFYYLATIATARKDLNALKRYTKQHANFLFGVNVENAKENPNALLQRVTKTLTQYSKNPLVNNDFENAEGLTKLQTAFLTQIESQRKMYKANLALTPKISIKFFSVKTTNLLEKASTVADSIVDALEKRKAFRGVIKKAKEDLMLRSRVTRVKGVKIQVAGRLNGAEIARSEWVRAGRVPLQTLRANIDYAYRTANTIYGIIGVKVWIFKGYSKI</sequence>
<evidence type="ECO:0000305" key="1"/>
<reference key="1">
    <citation type="journal article" date="1992" name="Curr. Genet.">
        <title>Organization and structure of plastome psbF, psbL, petG and ORF712 genes in Chlamydomonas reinhardtii.</title>
        <authorList>
            <person name="Fong S.E."/>
            <person name="Surzycki S.J."/>
        </authorList>
    </citation>
    <scope>NUCLEOTIDE SEQUENCE [GENOMIC DNA]</scope>
</reference>
<reference key="2">
    <citation type="journal article" date="2009" name="BMC Evol. Biol.">
        <title>Nucleotide diversity of the Chlamydomonas reinhardtii plastid genome: addressing the mutational-hazard hypothesis.</title>
        <authorList>
            <person name="Smith D.R."/>
            <person name="Lee R.W."/>
        </authorList>
    </citation>
    <scope>NUCLEOTIDE SEQUENCE [LARGE SCALE GENOMIC DNA]</scope>
    <source>
        <strain>CC-503</strain>
    </source>
</reference>
<reference key="3">
    <citation type="journal article" date="2002" name="Plant Cell">
        <title>Proteomic characterization of the small subunit of Chlamydomonas reinhardtii chloroplast ribosome: identification of a novel S1 domain-containing protein and unusually large orthologs of bacterial S2, S3, and S5.</title>
        <authorList>
            <person name="Yamaguchi K."/>
            <person name="Prieto S."/>
            <person name="Beligni M.V."/>
            <person name="Haynes P.A."/>
            <person name="McDonald W.H."/>
            <person name="Yates J.R. III"/>
            <person name="Mayfield S.P."/>
        </authorList>
    </citation>
    <scope>PROTEIN SEQUENCE OF 43-54; 105-121; 289-297; 349-360; 466-478; 495-509; 521-535; 555-570; 571-584; 612-625 AND 691-702</scope>
    <source>
        <strain>Arg7/cw15</strain>
    </source>
</reference>
<reference key="4">
    <citation type="journal article" date="2002" name="Plant Cell">
        <title>The Chlamydomonas reinhardtii plastid chromosome: islands of genes in a sea of repeats.</title>
        <authorList>
            <person name="Maul J.E."/>
            <person name="Lilly J.W."/>
            <person name="Cui L."/>
            <person name="dePamphilis C.W."/>
            <person name="Miller W."/>
            <person name="Harris E.H."/>
            <person name="Stern D.B."/>
        </authorList>
    </citation>
    <scope>IDENTIFICATION</scope>
    <scope>COMPLETE PLASTID GENOME</scope>
</reference>
<reference key="5">
    <citation type="journal article" date="1993" name="FEBS Lett.">
        <title>The unusual rps3-like orf712 is functionally essential and structurally conserved in Chlamydomonas.</title>
        <authorList>
            <person name="Liu X.-Q."/>
            <person name="Huang C."/>
            <person name="Xu H."/>
        </authorList>
    </citation>
    <scope>CHARACTERIZATION</scope>
</reference>
<organism>
    <name type="scientific">Chlamydomonas reinhardtii</name>
    <name type="common">Chlamydomonas smithii</name>
    <dbReference type="NCBI Taxonomy" id="3055"/>
    <lineage>
        <taxon>Eukaryota</taxon>
        <taxon>Viridiplantae</taxon>
        <taxon>Chlorophyta</taxon>
        <taxon>core chlorophytes</taxon>
        <taxon>Chlorophyceae</taxon>
        <taxon>CS clade</taxon>
        <taxon>Chlamydomonadales</taxon>
        <taxon>Chlamydomonadaceae</taxon>
        <taxon>Chlamydomonas</taxon>
    </lineage>
</organism>
<accession>Q08365</accession>
<accession>B7U1I6</accession>
<comment type="subunit">
    <text>Part of the 30S ribosomal subunit.</text>
</comment>
<comment type="subcellular location">
    <subcellularLocation>
        <location>Plastid</location>
        <location>Chloroplast</location>
    </subcellularLocation>
</comment>
<comment type="miscellaneous">
    <text>The large insertion sequence is present in the protein as found in ribosomes.</text>
</comment>
<comment type="similarity">
    <text evidence="1">Belongs to the universal ribosomal protein uS3 family.</text>
</comment>
<comment type="sequence caution" evidence="1">
    <conflict type="miscellaneous discrepancy">
        <sequence resource="EMBL-CDS" id="CAA46980"/>
    </conflict>
    <text>Sequencing errors.</text>
</comment>
<proteinExistence type="evidence at protein level"/>
<dbReference type="EMBL" id="X66250">
    <property type="protein sequence ID" value="CAA46980.1"/>
    <property type="status" value="ALT_SEQ"/>
    <property type="molecule type" value="Genomic_DNA"/>
</dbReference>
<dbReference type="EMBL" id="FJ423446">
    <property type="protein sequence ID" value="ACJ50133.1"/>
    <property type="molecule type" value="Genomic_DNA"/>
</dbReference>
<dbReference type="EMBL" id="BK000554">
    <property type="protein sequence ID" value="DAA00947.1"/>
    <property type="molecule type" value="Genomic_DNA"/>
</dbReference>
<dbReference type="PIR" id="S26881">
    <property type="entry name" value="S26881"/>
</dbReference>
<dbReference type="RefSeq" id="NP_958402.1">
    <property type="nucleotide sequence ID" value="NC_005353.1"/>
</dbReference>
<dbReference type="SMR" id="Q08365"/>
<dbReference type="STRING" id="3055.Q08365"/>
<dbReference type="PaxDb" id="3055-DAA00947"/>
<dbReference type="GeneID" id="2716997"/>
<dbReference type="KEGG" id="cre:ChreCp046"/>
<dbReference type="eggNOG" id="ENOG502QV63">
    <property type="taxonomic scope" value="Eukaryota"/>
</dbReference>
<dbReference type="HOGENOM" id="CLU_387999_0_0_1"/>
<dbReference type="InParanoid" id="Q08365"/>
<dbReference type="Proteomes" id="UP000006906">
    <property type="component" value="Chloroplast"/>
</dbReference>
<dbReference type="GO" id="GO:0009507">
    <property type="term" value="C:chloroplast"/>
    <property type="evidence" value="ECO:0007669"/>
    <property type="project" value="UniProtKB-SubCell"/>
</dbReference>
<dbReference type="GO" id="GO:0022627">
    <property type="term" value="C:cytosolic small ribosomal subunit"/>
    <property type="evidence" value="ECO:0000318"/>
    <property type="project" value="GO_Central"/>
</dbReference>
<dbReference type="GO" id="GO:0003723">
    <property type="term" value="F:RNA binding"/>
    <property type="evidence" value="ECO:0007669"/>
    <property type="project" value="InterPro"/>
</dbReference>
<dbReference type="GO" id="GO:0003735">
    <property type="term" value="F:structural constituent of ribosome"/>
    <property type="evidence" value="ECO:0000318"/>
    <property type="project" value="GO_Central"/>
</dbReference>
<dbReference type="GO" id="GO:0006412">
    <property type="term" value="P:translation"/>
    <property type="evidence" value="ECO:0007669"/>
    <property type="project" value="UniProtKB-UniRule"/>
</dbReference>
<dbReference type="CDD" id="cd02412">
    <property type="entry name" value="KH-II_30S_S3"/>
    <property type="match status" value="1"/>
</dbReference>
<dbReference type="Gene3D" id="3.30.1140.32">
    <property type="entry name" value="Ribosomal protein S3, C-terminal domain"/>
    <property type="match status" value="1"/>
</dbReference>
<dbReference type="HAMAP" id="MF_01309_B">
    <property type="entry name" value="Ribosomal_uS3_B"/>
    <property type="match status" value="1"/>
</dbReference>
<dbReference type="InterPro" id="IPR009019">
    <property type="entry name" value="KH_sf_prok-type"/>
</dbReference>
<dbReference type="InterPro" id="IPR036419">
    <property type="entry name" value="Ribosomal_S3_C_sf"/>
</dbReference>
<dbReference type="InterPro" id="IPR005704">
    <property type="entry name" value="Ribosomal_uS3_bac-typ"/>
</dbReference>
<dbReference type="InterPro" id="IPR001351">
    <property type="entry name" value="Ribosomal_uS3_C"/>
</dbReference>
<dbReference type="InterPro" id="IPR018280">
    <property type="entry name" value="Ribosomal_uS3_CS"/>
</dbReference>
<dbReference type="NCBIfam" id="TIGR01009">
    <property type="entry name" value="rpsC_bact"/>
    <property type="match status" value="1"/>
</dbReference>
<dbReference type="PANTHER" id="PTHR11760">
    <property type="entry name" value="30S/40S RIBOSOMAL PROTEIN S3"/>
    <property type="match status" value="1"/>
</dbReference>
<dbReference type="PANTHER" id="PTHR11760:SF19">
    <property type="entry name" value="SMALL RIBOSOMAL SUBUNIT PROTEIN US3C"/>
    <property type="match status" value="1"/>
</dbReference>
<dbReference type="Pfam" id="PF00189">
    <property type="entry name" value="Ribosomal_S3_C"/>
    <property type="match status" value="1"/>
</dbReference>
<dbReference type="SUPFAM" id="SSF54814">
    <property type="entry name" value="Prokaryotic type KH domain (KH-domain type II)"/>
    <property type="match status" value="1"/>
</dbReference>
<dbReference type="SUPFAM" id="SSF54821">
    <property type="entry name" value="Ribosomal protein S3 C-terminal domain"/>
    <property type="match status" value="1"/>
</dbReference>
<dbReference type="PROSITE" id="PS00548">
    <property type="entry name" value="RIBOSOMAL_S3"/>
    <property type="match status" value="1"/>
</dbReference>